<accession>Q8NDV3</accession>
<accession>A0AV46</accession>
<accession>B0QY23</accession>
<accession>B0QY24</accession>
<accession>Q5TIC3</accession>
<accession>Q6ZUF9</accession>
<accession>Q9Y3G5</accession>
<dbReference type="EMBL" id="AJ504806">
    <property type="protein sequence ID" value="CAD43404.2"/>
    <property type="molecule type" value="mRNA"/>
</dbReference>
<dbReference type="EMBL" id="AL008718">
    <property type="status" value="NOT_ANNOTATED_CDS"/>
    <property type="molecule type" value="Genomic_DNA"/>
</dbReference>
<dbReference type="EMBL" id="AL021391">
    <property type="status" value="NOT_ANNOTATED_CDS"/>
    <property type="molecule type" value="Genomic_DNA"/>
</dbReference>
<dbReference type="EMBL" id="BC126208">
    <property type="protein sequence ID" value="AAI26209.1"/>
    <property type="molecule type" value="mRNA"/>
</dbReference>
<dbReference type="EMBL" id="AK125736">
    <property type="protein sequence ID" value="BAC86266.1"/>
    <property type="status" value="ALT_INIT"/>
    <property type="molecule type" value="mRNA"/>
</dbReference>
<dbReference type="CCDS" id="CCDS43027.1">
    <molecule id="Q8NDV3-3"/>
</dbReference>
<dbReference type="CCDS" id="CCDS74876.1">
    <molecule id="Q8NDV3-2"/>
</dbReference>
<dbReference type="RefSeq" id="NP_001278430.1">
    <molecule id="Q8NDV3-2"/>
    <property type="nucleotide sequence ID" value="NM_001291501.2"/>
</dbReference>
<dbReference type="RefSeq" id="NP_683515.4">
    <molecule id="Q8NDV3-3"/>
    <property type="nucleotide sequence ID" value="NM_148674.4"/>
</dbReference>
<dbReference type="SMR" id="Q8NDV3"/>
<dbReference type="BioGRID" id="118018">
    <property type="interactions" value="11"/>
</dbReference>
<dbReference type="ComplexPortal" id="CPX-6082">
    <property type="entry name" value="Nuclear meiotic cohesin complex, RAD21 variant"/>
</dbReference>
<dbReference type="ComplexPortal" id="CPX-7441">
    <property type="entry name" value="Nuclear meiotic cohesin complex, RAD21L1 variant"/>
</dbReference>
<dbReference type="ComplexPortal" id="CPX-7442">
    <property type="entry name" value="Nuclear meiotic cohesin complex, REC8 variant"/>
</dbReference>
<dbReference type="FunCoup" id="Q8NDV3">
    <property type="interactions" value="1340"/>
</dbReference>
<dbReference type="IntAct" id="Q8NDV3">
    <property type="interactions" value="4"/>
</dbReference>
<dbReference type="STRING" id="9606.ENSP00000350036"/>
<dbReference type="GlyGen" id="Q8NDV3">
    <property type="glycosylation" value="1 site, 1 O-linked glycan (1 site)"/>
</dbReference>
<dbReference type="iPTMnet" id="Q8NDV3"/>
<dbReference type="PhosphoSitePlus" id="Q8NDV3"/>
<dbReference type="BioMuta" id="SMC1B"/>
<dbReference type="DMDM" id="57015410"/>
<dbReference type="jPOST" id="Q8NDV3"/>
<dbReference type="MassIVE" id="Q8NDV3"/>
<dbReference type="PaxDb" id="9606-ENSP00000350036"/>
<dbReference type="PeptideAtlas" id="Q8NDV3"/>
<dbReference type="ProteomicsDB" id="73059">
    <molecule id="Q8NDV3-2"/>
</dbReference>
<dbReference type="ProteomicsDB" id="73060">
    <molecule id="Q8NDV3-3"/>
</dbReference>
<dbReference type="Pumba" id="Q8NDV3"/>
<dbReference type="Antibodypedia" id="233">
    <property type="antibodies" value="122 antibodies from 22 providers"/>
</dbReference>
<dbReference type="DNASU" id="27127"/>
<dbReference type="Ensembl" id="ENST00000357450.9">
    <molecule id="Q8NDV3-3"/>
    <property type="protein sequence ID" value="ENSP00000350036.4"/>
    <property type="gene ID" value="ENSG00000077935.17"/>
</dbReference>
<dbReference type="Ensembl" id="ENST00000404354.3">
    <molecule id="Q8NDV3-2"/>
    <property type="protein sequence ID" value="ENSP00000385902.3"/>
    <property type="gene ID" value="ENSG00000077935.17"/>
</dbReference>
<dbReference type="GeneID" id="27127"/>
<dbReference type="KEGG" id="hsa:27127"/>
<dbReference type="MANE-Select" id="ENST00000357450.9">
    <property type="protein sequence ID" value="ENSP00000350036.4"/>
    <property type="RefSeq nucleotide sequence ID" value="NM_148674.5"/>
    <property type="RefSeq protein sequence ID" value="NP_683515.4"/>
</dbReference>
<dbReference type="UCSC" id="uc003bgc.4">
    <molecule id="Q8NDV3-3"/>
    <property type="organism name" value="human"/>
</dbReference>
<dbReference type="AGR" id="HGNC:11112"/>
<dbReference type="CTD" id="27127"/>
<dbReference type="DisGeNET" id="27127"/>
<dbReference type="GeneCards" id="SMC1B"/>
<dbReference type="HGNC" id="HGNC:11112">
    <property type="gene designation" value="SMC1B"/>
</dbReference>
<dbReference type="HPA" id="ENSG00000077935">
    <property type="expression patterns" value="Tissue enriched (testis)"/>
</dbReference>
<dbReference type="MIM" id="608685">
    <property type="type" value="gene"/>
</dbReference>
<dbReference type="neXtProt" id="NX_Q8NDV3"/>
<dbReference type="OpenTargets" id="ENSG00000077935"/>
<dbReference type="PharmGKB" id="PA35962"/>
<dbReference type="VEuPathDB" id="HostDB:ENSG00000077935"/>
<dbReference type="eggNOG" id="KOG0018">
    <property type="taxonomic scope" value="Eukaryota"/>
</dbReference>
<dbReference type="GeneTree" id="ENSGT00940000157633"/>
<dbReference type="HOGENOM" id="CLU_001042_0_2_1"/>
<dbReference type="InParanoid" id="Q8NDV3"/>
<dbReference type="OMA" id="HKARCWD"/>
<dbReference type="OrthoDB" id="413649at2759"/>
<dbReference type="PAN-GO" id="Q8NDV3">
    <property type="GO annotations" value="4 GO annotations based on evolutionary models"/>
</dbReference>
<dbReference type="PhylomeDB" id="Q8NDV3"/>
<dbReference type="TreeFam" id="TF101156"/>
<dbReference type="PathwayCommons" id="Q8NDV3"/>
<dbReference type="Reactome" id="R-HSA-1221632">
    <property type="pathway name" value="Meiotic synapsis"/>
</dbReference>
<dbReference type="SignaLink" id="Q8NDV3"/>
<dbReference type="BioGRID-ORCS" id="27127">
    <property type="hits" value="13 hits in 1149 CRISPR screens"/>
</dbReference>
<dbReference type="ChiTaRS" id="SMC1B">
    <property type="organism name" value="human"/>
</dbReference>
<dbReference type="GeneWiki" id="SMC1B"/>
<dbReference type="GenomeRNAi" id="27127"/>
<dbReference type="Pharos" id="Q8NDV3">
    <property type="development level" value="Tbio"/>
</dbReference>
<dbReference type="PRO" id="PR:Q8NDV3"/>
<dbReference type="Proteomes" id="UP000005640">
    <property type="component" value="Chromosome 22"/>
</dbReference>
<dbReference type="RNAct" id="Q8NDV3">
    <property type="molecule type" value="protein"/>
</dbReference>
<dbReference type="Bgee" id="ENSG00000077935">
    <property type="expression patterns" value="Expressed in male germ line stem cell (sensu Vertebrata) in testis and 25 other cell types or tissues"/>
</dbReference>
<dbReference type="GO" id="GO:0000775">
    <property type="term" value="C:chromosome, centromeric region"/>
    <property type="evidence" value="ECO:0007669"/>
    <property type="project" value="UniProtKB-SubCell"/>
</dbReference>
<dbReference type="GO" id="GO:0005829">
    <property type="term" value="C:cytosol"/>
    <property type="evidence" value="ECO:0000314"/>
    <property type="project" value="HPA"/>
</dbReference>
<dbReference type="GO" id="GO:0000800">
    <property type="term" value="C:lateral element"/>
    <property type="evidence" value="ECO:0007669"/>
    <property type="project" value="Ensembl"/>
</dbReference>
<dbReference type="GO" id="GO:0030893">
    <property type="term" value="C:meiotic cohesin complex"/>
    <property type="evidence" value="ECO:0000314"/>
    <property type="project" value="UniProtKB"/>
</dbReference>
<dbReference type="GO" id="GO:0005654">
    <property type="term" value="C:nucleoplasm"/>
    <property type="evidence" value="ECO:0000314"/>
    <property type="project" value="HPA"/>
</dbReference>
<dbReference type="GO" id="GO:0005634">
    <property type="term" value="C:nucleus"/>
    <property type="evidence" value="ECO:0000318"/>
    <property type="project" value="GO_Central"/>
</dbReference>
<dbReference type="GO" id="GO:0005524">
    <property type="term" value="F:ATP binding"/>
    <property type="evidence" value="ECO:0007669"/>
    <property type="project" value="UniProtKB-KW"/>
</dbReference>
<dbReference type="GO" id="GO:0016887">
    <property type="term" value="F:ATP hydrolysis activity"/>
    <property type="evidence" value="ECO:0007669"/>
    <property type="project" value="InterPro"/>
</dbReference>
<dbReference type="GO" id="GO:0003677">
    <property type="term" value="F:DNA binding"/>
    <property type="evidence" value="ECO:0000318"/>
    <property type="project" value="GO_Central"/>
</dbReference>
<dbReference type="GO" id="GO:0051321">
    <property type="term" value="P:meiotic cell cycle"/>
    <property type="evidence" value="ECO:0007669"/>
    <property type="project" value="UniProtKB-KW"/>
</dbReference>
<dbReference type="GO" id="GO:0007062">
    <property type="term" value="P:sister chromatid cohesion"/>
    <property type="evidence" value="ECO:0000318"/>
    <property type="project" value="GO_Central"/>
</dbReference>
<dbReference type="CDD" id="cd03275">
    <property type="entry name" value="ABC_SMC1_euk"/>
    <property type="match status" value="2"/>
</dbReference>
<dbReference type="FunFam" id="1.20.1060.20:FF:000001">
    <property type="entry name" value="Structural maintenance of chromosomes 1A"/>
    <property type="match status" value="1"/>
</dbReference>
<dbReference type="FunFam" id="3.40.50.300:FF:000564">
    <property type="entry name" value="Structural maintenance of chromosomes 1A"/>
    <property type="match status" value="1"/>
</dbReference>
<dbReference type="FunFam" id="3.30.70.1620:FF:000001">
    <property type="entry name" value="Structural maintenance of chromosomes 1B"/>
    <property type="match status" value="1"/>
</dbReference>
<dbReference type="FunFam" id="3.40.50.300:FF:000562">
    <property type="entry name" value="Structural maintenance of chromosomes protein"/>
    <property type="match status" value="1"/>
</dbReference>
<dbReference type="Gene3D" id="1.20.1060.20">
    <property type="match status" value="1"/>
</dbReference>
<dbReference type="Gene3D" id="3.30.70.1620">
    <property type="match status" value="1"/>
</dbReference>
<dbReference type="Gene3D" id="3.40.50.300">
    <property type="entry name" value="P-loop containing nucleotide triphosphate hydrolases"/>
    <property type="match status" value="2"/>
</dbReference>
<dbReference type="InterPro" id="IPR027417">
    <property type="entry name" value="P-loop_NTPase"/>
</dbReference>
<dbReference type="InterPro" id="IPR003395">
    <property type="entry name" value="RecF/RecN/SMC_N"/>
</dbReference>
<dbReference type="InterPro" id="IPR024704">
    <property type="entry name" value="SMC"/>
</dbReference>
<dbReference type="InterPro" id="IPR028468">
    <property type="entry name" value="Smc1_ABC"/>
</dbReference>
<dbReference type="InterPro" id="IPR010935">
    <property type="entry name" value="SMC_hinge"/>
</dbReference>
<dbReference type="InterPro" id="IPR036277">
    <property type="entry name" value="SMC_hinge_sf"/>
</dbReference>
<dbReference type="PANTHER" id="PTHR18937:SF147">
    <property type="entry name" value="STRUCTURAL MAINTENANCE OF CHROMOSOMES PROTEIN 1B"/>
    <property type="match status" value="1"/>
</dbReference>
<dbReference type="PANTHER" id="PTHR18937">
    <property type="entry name" value="STRUCTURAL MAINTENANCE OF CHROMOSOMES SMC FAMILY MEMBER"/>
    <property type="match status" value="1"/>
</dbReference>
<dbReference type="Pfam" id="PF06470">
    <property type="entry name" value="SMC_hinge"/>
    <property type="match status" value="1"/>
</dbReference>
<dbReference type="Pfam" id="PF02463">
    <property type="entry name" value="SMC_N"/>
    <property type="match status" value="1"/>
</dbReference>
<dbReference type="PIRSF" id="PIRSF005719">
    <property type="entry name" value="SMC"/>
    <property type="match status" value="1"/>
</dbReference>
<dbReference type="SMART" id="SM00968">
    <property type="entry name" value="SMC_hinge"/>
    <property type="match status" value="1"/>
</dbReference>
<dbReference type="SUPFAM" id="SSF52540">
    <property type="entry name" value="P-loop containing nucleoside triphosphate hydrolases"/>
    <property type="match status" value="2"/>
</dbReference>
<dbReference type="SUPFAM" id="SSF75553">
    <property type="entry name" value="Smc hinge domain"/>
    <property type="match status" value="1"/>
</dbReference>
<organism>
    <name type="scientific">Homo sapiens</name>
    <name type="common">Human</name>
    <dbReference type="NCBI Taxonomy" id="9606"/>
    <lineage>
        <taxon>Eukaryota</taxon>
        <taxon>Metazoa</taxon>
        <taxon>Chordata</taxon>
        <taxon>Craniata</taxon>
        <taxon>Vertebrata</taxon>
        <taxon>Euteleostomi</taxon>
        <taxon>Mammalia</taxon>
        <taxon>Eutheria</taxon>
        <taxon>Euarchontoglires</taxon>
        <taxon>Primates</taxon>
        <taxon>Haplorrhini</taxon>
        <taxon>Catarrhini</taxon>
        <taxon>Hominidae</taxon>
        <taxon>Homo</taxon>
    </lineage>
</organism>
<protein>
    <recommendedName>
        <fullName>Structural maintenance of chromosomes protein 1B</fullName>
        <shortName>SMC protein 1B</shortName>
        <shortName>SMC-1-beta</shortName>
        <shortName>SMC-1B</shortName>
    </recommendedName>
</protein>
<comment type="function">
    <text evidence="1">Meiosis-specific component of cohesin complex. Required for the maintenance of meiotic cohesion, but not, or only to a minor extent, for its establishment. Contributes to axial element (AE) formation and the organization of chromatin loops along the AE. Plays a key role in synapsis, recombination and chromosome movements. The cohesin complex is required for the cohesion of sister chromatids after DNA replication. The cohesin complex apparently forms a large proteinaceous ring within which sister chromatids can be trapped. At anaphase, the complex is cleaved and dissociates from chromatin, allowing sister chromatids to segregate. The meiosis-specific cohesin complex probably replaces mitosis specific cohesin complex when it dissociates from chromatin during prophase I (By similarity).</text>
</comment>
<comment type="subunit">
    <text evidence="1 2">Forms a heterodimer with SMC3. Component of a meiosis-specific cohesin complex, probably composed of the SMC1B and SMC3 heterodimer attached via their SMC hinge domain, RAD21 (or its meiosis-specific related protein REC8), which link them, and STAG3, which interacts with RAD21 or REC8 (By similarity). The cohesin complex interacts with the cohesin loading complex subunits NIPBL/Scc2 (via HEAT repeats) and MAU2/Scc4. NIPBL directly contacts all members of the complex, RAD21, SMC1A/B, SMC3 and STAG1 (By similarity).</text>
</comment>
<comment type="subcellular location">
    <subcellularLocation>
        <location evidence="3">Nucleus</location>
    </subcellularLocation>
    <subcellularLocation>
        <location evidence="3">Chromosome</location>
    </subcellularLocation>
    <subcellularLocation>
        <location evidence="3">Chromosome</location>
        <location evidence="3">Centromere</location>
    </subcellularLocation>
    <text evidence="3">Associates with chromatin. In prophase I stage of meiosis, localizes along the AE of synaptonemal complexes. In late-pachytene-diplotene, the bulk of protein dissociates from the chromosome arms probably because of phosphorylation by PLK, except at centromeres, where cohesin complexes remain. Remains chromatin associated at the centromeres up to metaphase II. At anaphase II, dissociates from centromeres, allowing chromosomes segregation (By similarity).</text>
</comment>
<comment type="alternative products">
    <event type="alternative splicing"/>
    <isoform>
        <id>Q8NDV3-3</id>
        <name>1</name>
        <sequence type="displayed"/>
    </isoform>
    <isoform>
        <id>Q8NDV3-2</id>
        <name>2</name>
        <sequence type="described" ref="VSP_035028"/>
    </isoform>
</comment>
<comment type="domain">
    <text evidence="1">The flexible SMC hinge domain, which separates the large intramolecular coiled coil regions, allows the heterotypic interaction with the corresponding domain of SMC3, forming a V-shaped heterodimer. The two heads of the heterodimer are then connected by different ends of the cleavable RAD21 or REC8 protein, forming a ring structure (By similarity).</text>
</comment>
<comment type="similarity">
    <text evidence="10">Belongs to the SMC family. SMC1 subfamily.</text>
</comment>
<comment type="sequence caution" evidence="10">
    <conflict type="erroneous initiation">
        <sequence resource="EMBL-CDS" id="BAC86266"/>
    </conflict>
    <text>Truncated N-terminus.</text>
</comment>
<evidence type="ECO:0000250" key="1"/>
<evidence type="ECO:0000250" key="2">
    <source>
        <dbReference type="UniProtKB" id="Q14683"/>
    </source>
</evidence>
<evidence type="ECO:0000250" key="3">
    <source>
        <dbReference type="UniProtKB" id="Q920F6"/>
    </source>
</evidence>
<evidence type="ECO:0000250" key="4">
    <source>
        <dbReference type="UniProtKB" id="Q9CU62"/>
    </source>
</evidence>
<evidence type="ECO:0000255" key="5"/>
<evidence type="ECO:0000269" key="6">
    <source>
    </source>
</evidence>
<evidence type="ECO:0000269" key="7">
    <source>
    </source>
</evidence>
<evidence type="ECO:0000269" key="8">
    <source>
    </source>
</evidence>
<evidence type="ECO:0000303" key="9">
    <source>
    </source>
</evidence>
<evidence type="ECO:0000305" key="10"/>
<gene>
    <name type="primary">SMC1B</name>
    <name type="synonym">SMC1L2</name>
</gene>
<feature type="chain" id="PRO_0000118993" description="Structural maintenance of chromosomes protein 1B">
    <location>
        <begin position="1"/>
        <end position="1235"/>
    </location>
</feature>
<feature type="domain" description="SMC hinge">
    <location>
        <begin position="514"/>
        <end position="629"/>
    </location>
</feature>
<feature type="coiled-coil region" evidence="5">
    <location>
        <begin position="156"/>
        <end position="490"/>
    </location>
</feature>
<feature type="coiled-coil region" evidence="5">
    <location>
        <begin position="666"/>
        <end position="934"/>
    </location>
</feature>
<feature type="coiled-coil region" evidence="5">
    <location>
        <begin position="970"/>
        <end position="994"/>
    </location>
</feature>
<feature type="coiled-coil region" evidence="5">
    <location>
        <begin position="1022"/>
        <end position="1049"/>
    </location>
</feature>
<feature type="binding site" evidence="5">
    <location>
        <begin position="32"/>
        <end position="39"/>
    </location>
    <ligand>
        <name>ATP</name>
        <dbReference type="ChEBI" id="CHEBI:30616"/>
    </ligand>
</feature>
<feature type="modified residue" description="N6-acetyllysine" evidence="2">
    <location>
        <position position="648"/>
    </location>
</feature>
<feature type="modified residue" description="N6-acetyllysine" evidence="2">
    <location>
        <position position="713"/>
    </location>
</feature>
<feature type="modified residue" description="N6-acetyllysine" evidence="4">
    <location>
        <position position="1033"/>
    </location>
</feature>
<feature type="splice variant" id="VSP_035028" description="In isoform 2." evidence="9">
    <location>
        <begin position="1092"/>
        <end position="1165"/>
    </location>
</feature>
<feature type="sequence variant" id="VAR_045913" description="In dbSNP:rs136603." evidence="6">
    <original>V</original>
    <variation>F</variation>
    <location>
        <position position="473"/>
    </location>
</feature>
<feature type="sequence variant" id="VAR_057324" description="In dbSNP:rs9614653.">
    <original>R</original>
    <variation>Q</variation>
    <location>
        <position position="758"/>
    </location>
</feature>
<feature type="sequence variant" id="VAR_057325" description="In dbSNP:rs16993928.">
    <original>S</original>
    <variation>A</variation>
    <location>
        <position position="1008"/>
    </location>
</feature>
<feature type="sequence variant" id="VAR_045914" description="In dbSNP:rs5764698." evidence="7 8">
    <original>L</original>
    <variation>M</variation>
    <location>
        <position position="1050"/>
    </location>
</feature>
<feature type="sequence conflict" description="In Ref. 1; CAD43404." evidence="10" ref="1">
    <original>R</original>
    <variation>L</variation>
    <location>
        <position position="99"/>
    </location>
</feature>
<feature type="sequence conflict" description="In Ref. 4; BAC86266." evidence="10" ref="4">
    <original>Y</original>
    <variation>D</variation>
    <location>
        <position position="731"/>
    </location>
</feature>
<feature type="sequence conflict" description="In Ref. 4; BAC86266." evidence="10" ref="4">
    <original>S</original>
    <variation>G</variation>
    <location>
        <position position="752"/>
    </location>
</feature>
<feature type="sequence conflict" description="In Ref. 1; CAD43404." evidence="10" ref="1">
    <original>LEFEKQK</original>
    <variation>YFYKKML</variation>
    <location>
        <begin position="808"/>
        <end position="814"/>
    </location>
</feature>
<name>SMC1B_HUMAN</name>
<reference key="1">
    <citation type="journal article" date="2004" name="Mol. Biol. Evol.">
        <title>The evolution of SMC proteins: phylogenetic analysis and structural implications.</title>
        <authorList>
            <person name="Cobbe N."/>
            <person name="Heck M.M.S."/>
        </authorList>
    </citation>
    <scope>NUCLEOTIDE SEQUENCE [MRNA] (ISOFORM 1)</scope>
    <scope>VARIANT PHE-473</scope>
</reference>
<reference key="2">
    <citation type="journal article" date="1999" name="Nature">
        <title>The DNA sequence of human chromosome 22.</title>
        <authorList>
            <person name="Dunham I."/>
            <person name="Hunt A.R."/>
            <person name="Collins J.E."/>
            <person name="Bruskiewich R."/>
            <person name="Beare D.M."/>
            <person name="Clamp M."/>
            <person name="Smink L.J."/>
            <person name="Ainscough R."/>
            <person name="Almeida J.P."/>
            <person name="Babbage A.K."/>
            <person name="Bagguley C."/>
            <person name="Bailey J."/>
            <person name="Barlow K.F."/>
            <person name="Bates K.N."/>
            <person name="Beasley O.P."/>
            <person name="Bird C.P."/>
            <person name="Blakey S.E."/>
            <person name="Bridgeman A.M."/>
            <person name="Buck D."/>
            <person name="Burgess J."/>
            <person name="Burrill W.D."/>
            <person name="Burton J."/>
            <person name="Carder C."/>
            <person name="Carter N.P."/>
            <person name="Chen Y."/>
            <person name="Clark G."/>
            <person name="Clegg S.M."/>
            <person name="Cobley V.E."/>
            <person name="Cole C.G."/>
            <person name="Collier R.E."/>
            <person name="Connor R."/>
            <person name="Conroy D."/>
            <person name="Corby N.R."/>
            <person name="Coville G.J."/>
            <person name="Cox A.V."/>
            <person name="Davis J."/>
            <person name="Dawson E."/>
            <person name="Dhami P.D."/>
            <person name="Dockree C."/>
            <person name="Dodsworth S.J."/>
            <person name="Durbin R.M."/>
            <person name="Ellington A.G."/>
            <person name="Evans K.L."/>
            <person name="Fey J.M."/>
            <person name="Fleming K."/>
            <person name="French L."/>
            <person name="Garner A.A."/>
            <person name="Gilbert J.G.R."/>
            <person name="Goward M.E."/>
            <person name="Grafham D.V."/>
            <person name="Griffiths M.N.D."/>
            <person name="Hall C."/>
            <person name="Hall R.E."/>
            <person name="Hall-Tamlyn G."/>
            <person name="Heathcott R.W."/>
            <person name="Ho S."/>
            <person name="Holmes S."/>
            <person name="Hunt S.E."/>
            <person name="Jones M.C."/>
            <person name="Kershaw J."/>
            <person name="Kimberley A.M."/>
            <person name="King A."/>
            <person name="Laird G.K."/>
            <person name="Langford C.F."/>
            <person name="Leversha M.A."/>
            <person name="Lloyd C."/>
            <person name="Lloyd D.M."/>
            <person name="Martyn I.D."/>
            <person name="Mashreghi-Mohammadi M."/>
            <person name="Matthews L.H."/>
            <person name="Mccann O.T."/>
            <person name="Mcclay J."/>
            <person name="Mclaren S."/>
            <person name="McMurray A.A."/>
            <person name="Milne S.A."/>
            <person name="Mortimore B.J."/>
            <person name="Odell C.N."/>
            <person name="Pavitt R."/>
            <person name="Pearce A.V."/>
            <person name="Pearson D."/>
            <person name="Phillimore B.J.C.T."/>
            <person name="Phillips S.H."/>
            <person name="Plumb R.W."/>
            <person name="Ramsay H."/>
            <person name="Ramsey Y."/>
            <person name="Rogers L."/>
            <person name="Ross M.T."/>
            <person name="Scott C.E."/>
            <person name="Sehra H.K."/>
            <person name="Skuce C.D."/>
            <person name="Smalley S."/>
            <person name="Smith M.L."/>
            <person name="Soderlund C."/>
            <person name="Spragon L."/>
            <person name="Steward C.A."/>
            <person name="Sulston J.E."/>
            <person name="Swann R.M."/>
            <person name="Vaudin M."/>
            <person name="Wall M."/>
            <person name="Wallis J.M."/>
            <person name="Whiteley M.N."/>
            <person name="Willey D.L."/>
            <person name="Williams L."/>
            <person name="Williams S.A."/>
            <person name="Williamson H."/>
            <person name="Wilmer T.E."/>
            <person name="Wilming L."/>
            <person name="Wright C.L."/>
            <person name="Hubbard T."/>
            <person name="Bentley D.R."/>
            <person name="Beck S."/>
            <person name="Rogers J."/>
            <person name="Shimizu N."/>
            <person name="Minoshima S."/>
            <person name="Kawasaki K."/>
            <person name="Sasaki T."/>
            <person name="Asakawa S."/>
            <person name="Kudoh J."/>
            <person name="Shintani A."/>
            <person name="Shibuya K."/>
            <person name="Yoshizaki Y."/>
            <person name="Aoki N."/>
            <person name="Mitsuyama S."/>
            <person name="Roe B.A."/>
            <person name="Chen F."/>
            <person name="Chu L."/>
            <person name="Crabtree J."/>
            <person name="Deschamps S."/>
            <person name="Do A."/>
            <person name="Do T."/>
            <person name="Dorman A."/>
            <person name="Fang F."/>
            <person name="Fu Y."/>
            <person name="Hu P."/>
            <person name="Hua A."/>
            <person name="Kenton S."/>
            <person name="Lai H."/>
            <person name="Lao H.I."/>
            <person name="Lewis J."/>
            <person name="Lewis S."/>
            <person name="Lin S.-P."/>
            <person name="Loh P."/>
            <person name="Malaj E."/>
            <person name="Nguyen T."/>
            <person name="Pan H."/>
            <person name="Phan S."/>
            <person name="Qi S."/>
            <person name="Qian Y."/>
            <person name="Ray L."/>
            <person name="Ren Q."/>
            <person name="Shaull S."/>
            <person name="Sloan D."/>
            <person name="Song L."/>
            <person name="Wang Q."/>
            <person name="Wang Y."/>
            <person name="Wang Z."/>
            <person name="White J."/>
            <person name="Willingham D."/>
            <person name="Wu H."/>
            <person name="Yao Z."/>
            <person name="Zhan M."/>
            <person name="Zhang G."/>
            <person name="Chissoe S."/>
            <person name="Murray J."/>
            <person name="Miller N."/>
            <person name="Minx P."/>
            <person name="Fulton R."/>
            <person name="Johnson D."/>
            <person name="Bemis G."/>
            <person name="Bentley D."/>
            <person name="Bradshaw H."/>
            <person name="Bourne S."/>
            <person name="Cordes M."/>
            <person name="Du Z."/>
            <person name="Fulton L."/>
            <person name="Goela D."/>
            <person name="Graves T."/>
            <person name="Hawkins J."/>
            <person name="Hinds K."/>
            <person name="Kemp K."/>
            <person name="Latreille P."/>
            <person name="Layman D."/>
            <person name="Ozersky P."/>
            <person name="Rohlfing T."/>
            <person name="Scheet P."/>
            <person name="Walker C."/>
            <person name="Wamsley A."/>
            <person name="Wohldmann P."/>
            <person name="Pepin K."/>
            <person name="Nelson J."/>
            <person name="Korf I."/>
            <person name="Bedell J.A."/>
            <person name="Hillier L.W."/>
            <person name="Mardis E."/>
            <person name="Waterston R."/>
            <person name="Wilson R."/>
            <person name="Emanuel B.S."/>
            <person name="Shaikh T."/>
            <person name="Kurahashi H."/>
            <person name="Saitta S."/>
            <person name="Budarf M.L."/>
            <person name="McDermid H.E."/>
            <person name="Johnson A."/>
            <person name="Wong A.C.C."/>
            <person name="Morrow B.E."/>
            <person name="Edelmann L."/>
            <person name="Kim U.J."/>
            <person name="Shizuya H."/>
            <person name="Simon M.I."/>
            <person name="Dumanski J.P."/>
            <person name="Peyrard M."/>
            <person name="Kedra D."/>
            <person name="Seroussi E."/>
            <person name="Fransson I."/>
            <person name="Tapia I."/>
            <person name="Bruder C.E."/>
            <person name="O'Brien K.P."/>
            <person name="Wilkinson P."/>
            <person name="Bodenteich A."/>
            <person name="Hartman K."/>
            <person name="Hu X."/>
            <person name="Khan A.S."/>
            <person name="Lane L."/>
            <person name="Tilahun Y."/>
            <person name="Wright H."/>
        </authorList>
    </citation>
    <scope>NUCLEOTIDE SEQUENCE [LARGE SCALE GENOMIC DNA]</scope>
</reference>
<reference key="3">
    <citation type="journal article" date="2004" name="Genome Res.">
        <title>The status, quality, and expansion of the NIH full-length cDNA project: the Mammalian Gene Collection (MGC).</title>
        <authorList>
            <consortium name="The MGC Project Team"/>
        </authorList>
    </citation>
    <scope>NUCLEOTIDE SEQUENCE [LARGE SCALE MRNA] (ISOFORM 2)</scope>
    <scope>VARIANT MET-1050</scope>
</reference>
<reference key="4">
    <citation type="journal article" date="2004" name="Nat. Genet.">
        <title>Complete sequencing and characterization of 21,243 full-length human cDNAs.</title>
        <authorList>
            <person name="Ota T."/>
            <person name="Suzuki Y."/>
            <person name="Nishikawa T."/>
            <person name="Otsuki T."/>
            <person name="Sugiyama T."/>
            <person name="Irie R."/>
            <person name="Wakamatsu A."/>
            <person name="Hayashi K."/>
            <person name="Sato H."/>
            <person name="Nagai K."/>
            <person name="Kimura K."/>
            <person name="Makita H."/>
            <person name="Sekine M."/>
            <person name="Obayashi M."/>
            <person name="Nishi T."/>
            <person name="Shibahara T."/>
            <person name="Tanaka T."/>
            <person name="Ishii S."/>
            <person name="Yamamoto J."/>
            <person name="Saito K."/>
            <person name="Kawai Y."/>
            <person name="Isono Y."/>
            <person name="Nakamura Y."/>
            <person name="Nagahari K."/>
            <person name="Murakami K."/>
            <person name="Yasuda T."/>
            <person name="Iwayanagi T."/>
            <person name="Wagatsuma M."/>
            <person name="Shiratori A."/>
            <person name="Sudo H."/>
            <person name="Hosoiri T."/>
            <person name="Kaku Y."/>
            <person name="Kodaira H."/>
            <person name="Kondo H."/>
            <person name="Sugawara M."/>
            <person name="Takahashi M."/>
            <person name="Kanda K."/>
            <person name="Yokoi T."/>
            <person name="Furuya T."/>
            <person name="Kikkawa E."/>
            <person name="Omura Y."/>
            <person name="Abe K."/>
            <person name="Kamihara K."/>
            <person name="Katsuta N."/>
            <person name="Sato K."/>
            <person name="Tanikawa M."/>
            <person name="Yamazaki M."/>
            <person name="Ninomiya K."/>
            <person name="Ishibashi T."/>
            <person name="Yamashita H."/>
            <person name="Murakawa K."/>
            <person name="Fujimori K."/>
            <person name="Tanai H."/>
            <person name="Kimata M."/>
            <person name="Watanabe M."/>
            <person name="Hiraoka S."/>
            <person name="Chiba Y."/>
            <person name="Ishida S."/>
            <person name="Ono Y."/>
            <person name="Takiguchi S."/>
            <person name="Watanabe S."/>
            <person name="Yosida M."/>
            <person name="Hotuta T."/>
            <person name="Kusano J."/>
            <person name="Kanehori K."/>
            <person name="Takahashi-Fujii A."/>
            <person name="Hara H."/>
            <person name="Tanase T.-O."/>
            <person name="Nomura Y."/>
            <person name="Togiya S."/>
            <person name="Komai F."/>
            <person name="Hara R."/>
            <person name="Takeuchi K."/>
            <person name="Arita M."/>
            <person name="Imose N."/>
            <person name="Musashino K."/>
            <person name="Yuuki H."/>
            <person name="Oshima A."/>
            <person name="Sasaki N."/>
            <person name="Aotsuka S."/>
            <person name="Yoshikawa Y."/>
            <person name="Matsunawa H."/>
            <person name="Ichihara T."/>
            <person name="Shiohata N."/>
            <person name="Sano S."/>
            <person name="Moriya S."/>
            <person name="Momiyama H."/>
            <person name="Satoh N."/>
            <person name="Takami S."/>
            <person name="Terashima Y."/>
            <person name="Suzuki O."/>
            <person name="Nakagawa S."/>
            <person name="Senoh A."/>
            <person name="Mizoguchi H."/>
            <person name="Goto Y."/>
            <person name="Shimizu F."/>
            <person name="Wakebe H."/>
            <person name="Hishigaki H."/>
            <person name="Watanabe T."/>
            <person name="Sugiyama A."/>
            <person name="Takemoto M."/>
            <person name="Kawakami B."/>
            <person name="Yamazaki M."/>
            <person name="Watanabe K."/>
            <person name="Kumagai A."/>
            <person name="Itakura S."/>
            <person name="Fukuzumi Y."/>
            <person name="Fujimori Y."/>
            <person name="Komiyama M."/>
            <person name="Tashiro H."/>
            <person name="Tanigami A."/>
            <person name="Fujiwara T."/>
            <person name="Ono T."/>
            <person name="Yamada K."/>
            <person name="Fujii Y."/>
            <person name="Ozaki K."/>
            <person name="Hirao M."/>
            <person name="Ohmori Y."/>
            <person name="Kawabata A."/>
            <person name="Hikiji T."/>
            <person name="Kobatake N."/>
            <person name="Inagaki H."/>
            <person name="Ikema Y."/>
            <person name="Okamoto S."/>
            <person name="Okitani R."/>
            <person name="Kawakami T."/>
            <person name="Noguchi S."/>
            <person name="Itoh T."/>
            <person name="Shigeta K."/>
            <person name="Senba T."/>
            <person name="Matsumura K."/>
            <person name="Nakajima Y."/>
            <person name="Mizuno T."/>
            <person name="Morinaga M."/>
            <person name="Sasaki M."/>
            <person name="Togashi T."/>
            <person name="Oyama M."/>
            <person name="Hata H."/>
            <person name="Watanabe M."/>
            <person name="Komatsu T."/>
            <person name="Mizushima-Sugano J."/>
            <person name="Satoh T."/>
            <person name="Shirai Y."/>
            <person name="Takahashi Y."/>
            <person name="Nakagawa K."/>
            <person name="Okumura K."/>
            <person name="Nagase T."/>
            <person name="Nomura N."/>
            <person name="Kikuchi H."/>
            <person name="Masuho Y."/>
            <person name="Yamashita R."/>
            <person name="Nakai K."/>
            <person name="Yada T."/>
            <person name="Nakamura Y."/>
            <person name="Ohara O."/>
            <person name="Isogai T."/>
            <person name="Sugano S."/>
        </authorList>
    </citation>
    <scope>NUCLEOTIDE SEQUENCE [LARGE SCALE MRNA] OF 731-1235 (ISOFORM 1)</scope>
    <scope>VARIANT MET-1050</scope>
    <source>
        <tissue>Testis</tissue>
    </source>
</reference>
<keyword id="KW-0007">Acetylation</keyword>
<keyword id="KW-0025">Alternative splicing</keyword>
<keyword id="KW-0067">ATP-binding</keyword>
<keyword id="KW-0131">Cell cycle</keyword>
<keyword id="KW-0137">Centromere</keyword>
<keyword id="KW-0158">Chromosome</keyword>
<keyword id="KW-0175">Coiled coil</keyword>
<keyword id="KW-0469">Meiosis</keyword>
<keyword id="KW-0547">Nucleotide-binding</keyword>
<keyword id="KW-0539">Nucleus</keyword>
<keyword id="KW-1267">Proteomics identification</keyword>
<keyword id="KW-1185">Reference proteome</keyword>
<sequence length="1235" mass="143789">MAHLELLLVENFKSWRGRQVIGPFRRFTCIIGPNGSGKSNVMDALSFVMGEKIANLRVKNIQELIHGAHIGKPISSSASVKIIYVEESGEEKTFARIIRGGCSEFRFNDNLVSRSVYIAELEKIGIIVKAQNCLVFQGTVESISVKKPKERTQFFEEISTSGELIGEYEEKKRKLQKAEEDAQFNFNKKKNIAAERRQAKLEKEEAERYQSLLEELKMNKIQLQLFQLYHNEKKIHLLNTKLEHVNRDLSVKRESLSHHENIVKARKKEHGMLTRQLQQTEKELKSVETLLNQKRPQYIKAKENTSHHLKKLDVAKKSIKDSEKQCSKQEDDIKALETELADLDAAWRSFEKQIEEEILHKKRDIELEASQLDRYKELKEQVRKKVATMTQQLEKLQWEQKTDEERLAFEKRRHGEVQGNLKQIKEQIEDHKKRIEKLEEYTKTCMDCLKEKKQQEETLVDEIEKTKSRMSEVNEELNLIRSELQNAGIDTHEGKRQQKRAEVLEHLKRLYPDSVFGRLFDLCHPIHKKYQLAVTKVFGRFITAIVVASEKVAKDCIRFLKEERAEPETFLALDYLDIKPINERLRELKGCKMVIDVIKTQFPQLKKVIQFVCGNGLVCETMEEARHIALSGPERQKTVALDGTLFLKSGVISGGSSDLKYKARCWDEKELKNLRDRRSQKIQELKGLMKTLRKETDLKQIQTLIQGTQTRLKYSQNELEMIKKKHLVAFYQEQSQLQSELLNIESQCIMLSEGIKERQRRIKEFQEKIDKVEDDIFQHFCEEIGVENIREFENKHVKRQQEIDQKRLEFEKQKTRLNVQLEYSRSHLKKKLNKINTLKETIQKGSEDIDHLKKAEENCLQTVNELMAKQQQLKDIRVTQNSSAEKVQTQIEEERKKFLAVDREVGKLQKEVVSIQTSLEQKRLEKHNLLLDCKVQDIEIILLSGSLDDIIEVEMGTEAESTQATIDIYEKEEAFEIDYSSLKEDLKALQSDQEIEAHLRLLLQQVASQEDILLKTAAPNLRALENLKTVRDKFQESTDAFEASRKEARLCRQEFEQVKKRRYDLFTQCFEHVSISIDQIYKKLCRNNSAQAFLSPENPEEPYLEGISYNCVAPGKRFMPMDNLSGGEKCVAALALLFAVHSFRPAPFFVLDEVDAALDNTNIGKVSSYIKEQTQDQFQMIVISLKEEFYSRADALIGIYPEYDDCMFSRVLTLDLSQYPDTEGQESSKRHGESR</sequence>
<proteinExistence type="evidence at protein level"/>